<feature type="chain" id="PRO_1000199320" description="Phenylalanine--tRNA ligase alpha subunit">
    <location>
        <begin position="1"/>
        <end position="344"/>
    </location>
</feature>
<feature type="binding site" evidence="1">
    <location>
        <position position="255"/>
    </location>
    <ligand>
        <name>Mg(2+)</name>
        <dbReference type="ChEBI" id="CHEBI:18420"/>
        <note>shared with beta subunit</note>
    </ligand>
</feature>
<organism>
    <name type="scientific">Persephonella marina (strain DSM 14350 / EX-H1)</name>
    <dbReference type="NCBI Taxonomy" id="123214"/>
    <lineage>
        <taxon>Bacteria</taxon>
        <taxon>Pseudomonadati</taxon>
        <taxon>Aquificota</taxon>
        <taxon>Aquificia</taxon>
        <taxon>Aquificales</taxon>
        <taxon>Hydrogenothermaceae</taxon>
        <taxon>Persephonella</taxon>
    </lineage>
</organism>
<comment type="catalytic activity">
    <reaction evidence="1">
        <text>tRNA(Phe) + L-phenylalanine + ATP = L-phenylalanyl-tRNA(Phe) + AMP + diphosphate + H(+)</text>
        <dbReference type="Rhea" id="RHEA:19413"/>
        <dbReference type="Rhea" id="RHEA-COMP:9668"/>
        <dbReference type="Rhea" id="RHEA-COMP:9699"/>
        <dbReference type="ChEBI" id="CHEBI:15378"/>
        <dbReference type="ChEBI" id="CHEBI:30616"/>
        <dbReference type="ChEBI" id="CHEBI:33019"/>
        <dbReference type="ChEBI" id="CHEBI:58095"/>
        <dbReference type="ChEBI" id="CHEBI:78442"/>
        <dbReference type="ChEBI" id="CHEBI:78531"/>
        <dbReference type="ChEBI" id="CHEBI:456215"/>
        <dbReference type="EC" id="6.1.1.20"/>
    </reaction>
</comment>
<comment type="cofactor">
    <cofactor evidence="1">
        <name>Mg(2+)</name>
        <dbReference type="ChEBI" id="CHEBI:18420"/>
    </cofactor>
    <text evidence="1">Binds 2 magnesium ions per tetramer.</text>
</comment>
<comment type="subunit">
    <text evidence="1">Tetramer of two alpha and two beta subunits.</text>
</comment>
<comment type="subcellular location">
    <subcellularLocation>
        <location evidence="1">Cytoplasm</location>
    </subcellularLocation>
</comment>
<comment type="similarity">
    <text evidence="1">Belongs to the class-II aminoacyl-tRNA synthetase family. Phe-tRNA synthetase alpha subunit type 1 subfamily.</text>
</comment>
<reference key="1">
    <citation type="journal article" date="2009" name="J. Bacteriol.">
        <title>Complete and draft genome sequences of six members of the Aquificales.</title>
        <authorList>
            <person name="Reysenbach A.-L."/>
            <person name="Hamamura N."/>
            <person name="Podar M."/>
            <person name="Griffiths E."/>
            <person name="Ferreira S."/>
            <person name="Hochstein R."/>
            <person name="Heidelberg J."/>
            <person name="Johnson J."/>
            <person name="Mead D."/>
            <person name="Pohorille A."/>
            <person name="Sarmiento M."/>
            <person name="Schweighofer K."/>
            <person name="Seshadri R."/>
            <person name="Voytek M.A."/>
        </authorList>
    </citation>
    <scope>NUCLEOTIDE SEQUENCE [LARGE SCALE GENOMIC DNA]</scope>
    <source>
        <strain>DSM 14350 / EX-H1</strain>
    </source>
</reference>
<evidence type="ECO:0000255" key="1">
    <source>
        <dbReference type="HAMAP-Rule" id="MF_00281"/>
    </source>
</evidence>
<dbReference type="EC" id="6.1.1.20" evidence="1"/>
<dbReference type="EMBL" id="CP001230">
    <property type="protein sequence ID" value="ACO04770.1"/>
    <property type="molecule type" value="Genomic_DNA"/>
</dbReference>
<dbReference type="RefSeq" id="WP_015898874.1">
    <property type="nucleotide sequence ID" value="NC_012440.1"/>
</dbReference>
<dbReference type="SMR" id="C0QT55"/>
<dbReference type="STRING" id="123214.PERMA_0072"/>
<dbReference type="PaxDb" id="123214-PERMA_0072"/>
<dbReference type="KEGG" id="pmx:PERMA_0072"/>
<dbReference type="eggNOG" id="COG0016">
    <property type="taxonomic scope" value="Bacteria"/>
</dbReference>
<dbReference type="HOGENOM" id="CLU_025086_0_1_0"/>
<dbReference type="OrthoDB" id="9800719at2"/>
<dbReference type="Proteomes" id="UP000001366">
    <property type="component" value="Chromosome"/>
</dbReference>
<dbReference type="GO" id="GO:0005737">
    <property type="term" value="C:cytoplasm"/>
    <property type="evidence" value="ECO:0007669"/>
    <property type="project" value="UniProtKB-SubCell"/>
</dbReference>
<dbReference type="GO" id="GO:0005524">
    <property type="term" value="F:ATP binding"/>
    <property type="evidence" value="ECO:0007669"/>
    <property type="project" value="UniProtKB-UniRule"/>
</dbReference>
<dbReference type="GO" id="GO:0000287">
    <property type="term" value="F:magnesium ion binding"/>
    <property type="evidence" value="ECO:0007669"/>
    <property type="project" value="UniProtKB-UniRule"/>
</dbReference>
<dbReference type="GO" id="GO:0004826">
    <property type="term" value="F:phenylalanine-tRNA ligase activity"/>
    <property type="evidence" value="ECO:0007669"/>
    <property type="project" value="UniProtKB-UniRule"/>
</dbReference>
<dbReference type="GO" id="GO:0000049">
    <property type="term" value="F:tRNA binding"/>
    <property type="evidence" value="ECO:0007669"/>
    <property type="project" value="InterPro"/>
</dbReference>
<dbReference type="GO" id="GO:0006432">
    <property type="term" value="P:phenylalanyl-tRNA aminoacylation"/>
    <property type="evidence" value="ECO:0007669"/>
    <property type="project" value="UniProtKB-UniRule"/>
</dbReference>
<dbReference type="CDD" id="cd00496">
    <property type="entry name" value="PheRS_alpha_core"/>
    <property type="match status" value="1"/>
</dbReference>
<dbReference type="FunFam" id="3.30.930.10:FF:000003">
    <property type="entry name" value="Phenylalanine--tRNA ligase alpha subunit"/>
    <property type="match status" value="1"/>
</dbReference>
<dbReference type="Gene3D" id="3.30.930.10">
    <property type="entry name" value="Bira Bifunctional Protein, Domain 2"/>
    <property type="match status" value="1"/>
</dbReference>
<dbReference type="HAMAP" id="MF_00281">
    <property type="entry name" value="Phe_tRNA_synth_alpha1"/>
    <property type="match status" value="1"/>
</dbReference>
<dbReference type="InterPro" id="IPR006195">
    <property type="entry name" value="aa-tRNA-synth_II"/>
</dbReference>
<dbReference type="InterPro" id="IPR045864">
    <property type="entry name" value="aa-tRNA-synth_II/BPL/LPL"/>
</dbReference>
<dbReference type="InterPro" id="IPR004529">
    <property type="entry name" value="Phe-tRNA-synth_IIc_asu"/>
</dbReference>
<dbReference type="InterPro" id="IPR004188">
    <property type="entry name" value="Phe-tRNA_ligase_II_N"/>
</dbReference>
<dbReference type="InterPro" id="IPR022911">
    <property type="entry name" value="Phe_tRNA_ligase_alpha1_bac"/>
</dbReference>
<dbReference type="InterPro" id="IPR002319">
    <property type="entry name" value="Phenylalanyl-tRNA_Synthase"/>
</dbReference>
<dbReference type="InterPro" id="IPR010978">
    <property type="entry name" value="tRNA-bd_arm"/>
</dbReference>
<dbReference type="NCBIfam" id="TIGR00468">
    <property type="entry name" value="pheS"/>
    <property type="match status" value="1"/>
</dbReference>
<dbReference type="PANTHER" id="PTHR11538:SF41">
    <property type="entry name" value="PHENYLALANINE--TRNA LIGASE, MITOCHONDRIAL"/>
    <property type="match status" value="1"/>
</dbReference>
<dbReference type="PANTHER" id="PTHR11538">
    <property type="entry name" value="PHENYLALANYL-TRNA SYNTHETASE"/>
    <property type="match status" value="1"/>
</dbReference>
<dbReference type="Pfam" id="PF02912">
    <property type="entry name" value="Phe_tRNA-synt_N"/>
    <property type="match status" value="1"/>
</dbReference>
<dbReference type="Pfam" id="PF01409">
    <property type="entry name" value="tRNA-synt_2d"/>
    <property type="match status" value="1"/>
</dbReference>
<dbReference type="SUPFAM" id="SSF55681">
    <property type="entry name" value="Class II aaRS and biotin synthetases"/>
    <property type="match status" value="1"/>
</dbReference>
<dbReference type="SUPFAM" id="SSF46589">
    <property type="entry name" value="tRNA-binding arm"/>
    <property type="match status" value="1"/>
</dbReference>
<dbReference type="PROSITE" id="PS50862">
    <property type="entry name" value="AA_TRNA_LIGASE_II"/>
    <property type="match status" value="1"/>
</dbReference>
<sequence>MGLKEDLKALEEEAKKLIEEASDIGKLNDIRVNYLGKKGKIKSILKTLGKLSPEERKEIGQLANRIKDELEEALKEKTELLKKKALEEELRKNRIDITLPPQWIESGSSHPVISTLIEISQIFISMGFSVAEGPEVEKEKYNFDMLNIPPDHPARDMQDTFFLNNGDILRTHTSPVQIRTMLKHKPPIAVIAPGRVYRKDADPTHSPMFHQIEGLLVDRDVTFRDLKGILKIFLESVFGKDTKIRFRPSYFPFTEPSAEVDIGCTVCGGKGCRVCKGTGWLEILGCGMVDPEVFKAVGIDPEEYTGFAFGLGIERIAMLKYRITDIRLLFTGDMRFNQQFKGIR</sequence>
<protein>
    <recommendedName>
        <fullName evidence="1">Phenylalanine--tRNA ligase alpha subunit</fullName>
        <ecNumber evidence="1">6.1.1.20</ecNumber>
    </recommendedName>
    <alternativeName>
        <fullName evidence="1">Phenylalanyl-tRNA synthetase alpha subunit</fullName>
        <shortName evidence="1">PheRS</shortName>
    </alternativeName>
</protein>
<proteinExistence type="inferred from homology"/>
<keyword id="KW-0030">Aminoacyl-tRNA synthetase</keyword>
<keyword id="KW-0067">ATP-binding</keyword>
<keyword id="KW-0963">Cytoplasm</keyword>
<keyword id="KW-0436">Ligase</keyword>
<keyword id="KW-0460">Magnesium</keyword>
<keyword id="KW-0479">Metal-binding</keyword>
<keyword id="KW-0547">Nucleotide-binding</keyword>
<keyword id="KW-0648">Protein biosynthesis</keyword>
<keyword id="KW-1185">Reference proteome</keyword>
<gene>
    <name evidence="1" type="primary">pheS</name>
    <name type="ordered locus">PERMA_0072</name>
</gene>
<accession>C0QT55</accession>
<name>SYFA_PERMH</name>